<accession>Q9CPI4</accession>
<sequence>MSISVFNRCWSKVILETLVRQGVAHFCIAPGSRSTPLTLEAIRLQDSHRVTCHTHFDERGLGFFALGLAKVSKKPVAVIVTSGTAAANLYPAIIEARQTGVNLIVLTADRPPELIECGANQAIVQPHMYADYPVASVNLPRPSQDYSADWLISRLEQACYQQARQPGVVHVNVPFAEPLYEASETDIEAHSWLVPIQRWLNQHKPWIQQQTDQKEVLMHANWDHWRTMRGVIVVGRLPVEQTMGIMAWANTMGWIALTDVQSSVEASLPYADIWLANQTVKQKLLQADIVIQFGSGFISKRVNQFLAAFKQEYWIVEQSTGLIDPNHHAHTRFNAKVHHWLRAHPPLRQKPWLLEPLALSKFCASFIEKQVGGNLNEASLAHHLDRILSNNGVLFLGNSLFVRLVDALAKLPEGYPVYTNRGASGIDGLLATAAGIGIGANQPLVAMIGDVSALYDINSLALFKKVTQPTIIFVINNNGGAIFDMLPVEADVKEKYYRMPHHLEFSQLVQTFDLKYARPYTWADLGAVLKVAYSRRETTLIEIKVGASDASTIYKRLIEQISYAVIGE</sequence>
<dbReference type="EC" id="2.2.1.9" evidence="1"/>
<dbReference type="EMBL" id="AE004439">
    <property type="protein sequence ID" value="AAK02138.1"/>
    <property type="molecule type" value="Genomic_DNA"/>
</dbReference>
<dbReference type="RefSeq" id="WP_010906455.1">
    <property type="nucleotide sequence ID" value="NC_002663.1"/>
</dbReference>
<dbReference type="SMR" id="Q9CPI4"/>
<dbReference type="STRING" id="272843.PM0054"/>
<dbReference type="EnsemblBacteria" id="AAK02138">
    <property type="protein sequence ID" value="AAK02138"/>
    <property type="gene ID" value="PM0054"/>
</dbReference>
<dbReference type="KEGG" id="pmu:PM0054"/>
<dbReference type="PATRIC" id="fig|272843.6.peg.55"/>
<dbReference type="HOGENOM" id="CLU_006051_3_0_6"/>
<dbReference type="OrthoDB" id="9791859at2"/>
<dbReference type="UniPathway" id="UPA00079"/>
<dbReference type="UniPathway" id="UPA01057">
    <property type="reaction ID" value="UER00164"/>
</dbReference>
<dbReference type="Proteomes" id="UP000000809">
    <property type="component" value="Chromosome"/>
</dbReference>
<dbReference type="GO" id="GO:0070204">
    <property type="term" value="F:2-succinyl-5-enolpyruvyl-6-hydroxy-3-cyclohexene-1-carboxylic-acid synthase activity"/>
    <property type="evidence" value="ECO:0007669"/>
    <property type="project" value="UniProtKB-UniRule"/>
</dbReference>
<dbReference type="GO" id="GO:0000287">
    <property type="term" value="F:magnesium ion binding"/>
    <property type="evidence" value="ECO:0007669"/>
    <property type="project" value="UniProtKB-UniRule"/>
</dbReference>
<dbReference type="GO" id="GO:0030145">
    <property type="term" value="F:manganese ion binding"/>
    <property type="evidence" value="ECO:0007669"/>
    <property type="project" value="UniProtKB-UniRule"/>
</dbReference>
<dbReference type="GO" id="GO:0030976">
    <property type="term" value="F:thiamine pyrophosphate binding"/>
    <property type="evidence" value="ECO:0007669"/>
    <property type="project" value="UniProtKB-UniRule"/>
</dbReference>
<dbReference type="GO" id="GO:0009234">
    <property type="term" value="P:menaquinone biosynthetic process"/>
    <property type="evidence" value="ECO:0007669"/>
    <property type="project" value="UniProtKB-UniRule"/>
</dbReference>
<dbReference type="CDD" id="cd07037">
    <property type="entry name" value="TPP_PYR_MenD"/>
    <property type="match status" value="1"/>
</dbReference>
<dbReference type="CDD" id="cd02009">
    <property type="entry name" value="TPP_SHCHC_synthase"/>
    <property type="match status" value="1"/>
</dbReference>
<dbReference type="Gene3D" id="3.40.50.970">
    <property type="match status" value="2"/>
</dbReference>
<dbReference type="Gene3D" id="3.40.50.1220">
    <property type="entry name" value="TPP-binding domain"/>
    <property type="match status" value="1"/>
</dbReference>
<dbReference type="HAMAP" id="MF_01659">
    <property type="entry name" value="MenD"/>
    <property type="match status" value="1"/>
</dbReference>
<dbReference type="InterPro" id="IPR004433">
    <property type="entry name" value="MenaQ_synth_MenD"/>
</dbReference>
<dbReference type="InterPro" id="IPR032264">
    <property type="entry name" value="MenD_middle"/>
</dbReference>
<dbReference type="InterPro" id="IPR029061">
    <property type="entry name" value="THDP-binding"/>
</dbReference>
<dbReference type="InterPro" id="IPR012001">
    <property type="entry name" value="Thiamin_PyroP_enz_TPP-bd_dom"/>
</dbReference>
<dbReference type="InterPro" id="IPR011766">
    <property type="entry name" value="TPP_enzyme_TPP-bd"/>
</dbReference>
<dbReference type="NCBIfam" id="TIGR00173">
    <property type="entry name" value="menD"/>
    <property type="match status" value="1"/>
</dbReference>
<dbReference type="PANTHER" id="PTHR42916">
    <property type="entry name" value="2-SUCCINYL-5-ENOLPYRUVYL-6-HYDROXY-3-CYCLOHEXENE-1-CARBOXYLATE SYNTHASE"/>
    <property type="match status" value="1"/>
</dbReference>
<dbReference type="PANTHER" id="PTHR42916:SF1">
    <property type="entry name" value="PROTEIN PHYLLO, CHLOROPLASTIC"/>
    <property type="match status" value="1"/>
</dbReference>
<dbReference type="Pfam" id="PF02775">
    <property type="entry name" value="TPP_enzyme_C"/>
    <property type="match status" value="1"/>
</dbReference>
<dbReference type="Pfam" id="PF16582">
    <property type="entry name" value="TPP_enzyme_M_2"/>
    <property type="match status" value="1"/>
</dbReference>
<dbReference type="Pfam" id="PF02776">
    <property type="entry name" value="TPP_enzyme_N"/>
    <property type="match status" value="1"/>
</dbReference>
<dbReference type="PIRSF" id="PIRSF004983">
    <property type="entry name" value="MenD"/>
    <property type="match status" value="1"/>
</dbReference>
<dbReference type="SUPFAM" id="SSF52518">
    <property type="entry name" value="Thiamin diphosphate-binding fold (THDP-binding)"/>
    <property type="match status" value="2"/>
</dbReference>
<name>MEND_PASMU</name>
<organism>
    <name type="scientific">Pasteurella multocida (strain Pm70)</name>
    <dbReference type="NCBI Taxonomy" id="272843"/>
    <lineage>
        <taxon>Bacteria</taxon>
        <taxon>Pseudomonadati</taxon>
        <taxon>Pseudomonadota</taxon>
        <taxon>Gammaproteobacteria</taxon>
        <taxon>Pasteurellales</taxon>
        <taxon>Pasteurellaceae</taxon>
        <taxon>Pasteurella</taxon>
    </lineage>
</organism>
<proteinExistence type="inferred from homology"/>
<evidence type="ECO:0000255" key="1">
    <source>
        <dbReference type="HAMAP-Rule" id="MF_01659"/>
    </source>
</evidence>
<feature type="chain" id="PRO_0000090831" description="2-succinyl-5-enolpyruvyl-6-hydroxy-3-cyclohexene-1-carboxylate synthase">
    <location>
        <begin position="1"/>
        <end position="568"/>
    </location>
</feature>
<keyword id="KW-0460">Magnesium</keyword>
<keyword id="KW-0464">Manganese</keyword>
<keyword id="KW-0474">Menaquinone biosynthesis</keyword>
<keyword id="KW-0479">Metal-binding</keyword>
<keyword id="KW-1185">Reference proteome</keyword>
<keyword id="KW-0786">Thiamine pyrophosphate</keyword>
<keyword id="KW-0808">Transferase</keyword>
<reference key="1">
    <citation type="journal article" date="2001" name="Proc. Natl. Acad. Sci. U.S.A.">
        <title>Complete genomic sequence of Pasteurella multocida Pm70.</title>
        <authorList>
            <person name="May B.J."/>
            <person name="Zhang Q."/>
            <person name="Li L.L."/>
            <person name="Paustian M.L."/>
            <person name="Whittam T.S."/>
            <person name="Kapur V."/>
        </authorList>
    </citation>
    <scope>NUCLEOTIDE SEQUENCE [LARGE SCALE GENOMIC DNA]</scope>
    <source>
        <strain>Pm70</strain>
    </source>
</reference>
<comment type="function">
    <text evidence="1">Catalyzes the thiamine diphosphate-dependent decarboxylation of 2-oxoglutarate and the subsequent addition of the resulting succinic semialdehyde-thiamine pyrophosphate anion to isochorismate to yield 2-succinyl-5-enolpyruvyl-6-hydroxy-3-cyclohexene-1-carboxylate (SEPHCHC).</text>
</comment>
<comment type="catalytic activity">
    <reaction evidence="1">
        <text>isochorismate + 2-oxoglutarate + H(+) = 5-enolpyruvoyl-6-hydroxy-2-succinyl-cyclohex-3-ene-1-carboxylate + CO2</text>
        <dbReference type="Rhea" id="RHEA:25593"/>
        <dbReference type="ChEBI" id="CHEBI:15378"/>
        <dbReference type="ChEBI" id="CHEBI:16526"/>
        <dbReference type="ChEBI" id="CHEBI:16810"/>
        <dbReference type="ChEBI" id="CHEBI:29780"/>
        <dbReference type="ChEBI" id="CHEBI:58818"/>
        <dbReference type="EC" id="2.2.1.9"/>
    </reaction>
</comment>
<comment type="cofactor">
    <cofactor evidence="1">
        <name>Mg(2+)</name>
        <dbReference type="ChEBI" id="CHEBI:18420"/>
    </cofactor>
    <cofactor evidence="1">
        <name>Mn(2+)</name>
        <dbReference type="ChEBI" id="CHEBI:29035"/>
    </cofactor>
</comment>
<comment type="cofactor">
    <cofactor evidence="1">
        <name>thiamine diphosphate</name>
        <dbReference type="ChEBI" id="CHEBI:58937"/>
    </cofactor>
    <text evidence="1">Binds 1 thiamine pyrophosphate per subunit.</text>
</comment>
<comment type="pathway">
    <text evidence="1">Quinol/quinone metabolism; 1,4-dihydroxy-2-naphthoate biosynthesis; 1,4-dihydroxy-2-naphthoate from chorismate: step 2/7.</text>
</comment>
<comment type="pathway">
    <text evidence="1">Quinol/quinone metabolism; menaquinone biosynthesis.</text>
</comment>
<comment type="subunit">
    <text evidence="1">Homodimer.</text>
</comment>
<comment type="similarity">
    <text evidence="1">Belongs to the TPP enzyme family. MenD subfamily.</text>
</comment>
<gene>
    <name evidence="1" type="primary">menD</name>
    <name type="ordered locus">PM0054</name>
</gene>
<protein>
    <recommendedName>
        <fullName evidence="1">2-succinyl-5-enolpyruvyl-6-hydroxy-3-cyclohexene-1-carboxylate synthase</fullName>
        <shortName evidence="1">SEPHCHC synthase</shortName>
        <ecNumber evidence="1">2.2.1.9</ecNumber>
    </recommendedName>
    <alternativeName>
        <fullName evidence="1">Menaquinone biosynthesis protein MenD</fullName>
    </alternativeName>
</protein>